<feature type="chain" id="PRO_1000066044" description="Alanine racemase">
    <location>
        <begin position="1"/>
        <end position="371"/>
    </location>
</feature>
<feature type="active site" description="Proton acceptor; specific for D-alanine" evidence="1">
    <location>
        <position position="40"/>
    </location>
</feature>
<feature type="active site" description="Proton acceptor; specific for L-alanine" evidence="1">
    <location>
        <position position="263"/>
    </location>
</feature>
<feature type="binding site" evidence="1">
    <location>
        <position position="136"/>
    </location>
    <ligand>
        <name>substrate</name>
    </ligand>
</feature>
<feature type="binding site" evidence="1">
    <location>
        <position position="310"/>
    </location>
    <ligand>
        <name>substrate</name>
    </ligand>
</feature>
<feature type="modified residue" description="N6-(pyridoxal phosphate)lysine" evidence="1">
    <location>
        <position position="40"/>
    </location>
</feature>
<organism>
    <name type="scientific">Streptococcus mutans serotype c (strain ATCC 700610 / UA159)</name>
    <dbReference type="NCBI Taxonomy" id="210007"/>
    <lineage>
        <taxon>Bacteria</taxon>
        <taxon>Bacillati</taxon>
        <taxon>Bacillota</taxon>
        <taxon>Bacilli</taxon>
        <taxon>Lactobacillales</taxon>
        <taxon>Streptococcaceae</taxon>
        <taxon>Streptococcus</taxon>
    </lineage>
</organism>
<comment type="function">
    <text evidence="1">Catalyzes the interconversion of L-alanine and D-alanine. May also act on other amino acids.</text>
</comment>
<comment type="catalytic activity">
    <reaction evidence="1">
        <text>L-alanine = D-alanine</text>
        <dbReference type="Rhea" id="RHEA:20249"/>
        <dbReference type="ChEBI" id="CHEBI:57416"/>
        <dbReference type="ChEBI" id="CHEBI:57972"/>
        <dbReference type="EC" id="5.1.1.1"/>
    </reaction>
</comment>
<comment type="cofactor">
    <cofactor evidence="1">
        <name>pyridoxal 5'-phosphate</name>
        <dbReference type="ChEBI" id="CHEBI:597326"/>
    </cofactor>
</comment>
<comment type="pathway">
    <text evidence="1">Amino-acid biosynthesis; D-alanine biosynthesis; D-alanine from L-alanine: step 1/1.</text>
</comment>
<comment type="similarity">
    <text evidence="1">Belongs to the alanine racemase family.</text>
</comment>
<accession>Q8DSF4</accession>
<name>ALR_STRMU</name>
<proteinExistence type="inferred from homology"/>
<gene>
    <name type="primary">alr</name>
    <name type="ordered locus">SMU_1834</name>
</gene>
<reference key="1">
    <citation type="journal article" date="2002" name="Proc. Natl. Acad. Sci. U.S.A.">
        <title>Genome sequence of Streptococcus mutans UA159, a cariogenic dental pathogen.</title>
        <authorList>
            <person name="Ajdic D.J."/>
            <person name="McShan W.M."/>
            <person name="McLaughlin R.E."/>
            <person name="Savic G."/>
            <person name="Chang J."/>
            <person name="Carson M.B."/>
            <person name="Primeaux C."/>
            <person name="Tian R."/>
            <person name="Kenton S."/>
            <person name="Jia H.G."/>
            <person name="Lin S.P."/>
            <person name="Qian Y."/>
            <person name="Li S."/>
            <person name="Zhu H."/>
            <person name="Najar F.Z."/>
            <person name="Lai H."/>
            <person name="White J."/>
            <person name="Roe B.A."/>
            <person name="Ferretti J.J."/>
        </authorList>
    </citation>
    <scope>NUCLEOTIDE SEQUENCE [LARGE SCALE GENOMIC DNA]</scope>
    <source>
        <strain>ATCC 700610 / UA159</strain>
    </source>
</reference>
<dbReference type="EC" id="5.1.1.1" evidence="1"/>
<dbReference type="EMBL" id="AE014133">
    <property type="protein sequence ID" value="AAN59457.1"/>
    <property type="molecule type" value="Genomic_DNA"/>
</dbReference>
<dbReference type="RefSeq" id="NP_722151.1">
    <property type="nucleotide sequence ID" value="NC_004350.2"/>
</dbReference>
<dbReference type="RefSeq" id="WP_002263464.1">
    <property type="nucleotide sequence ID" value="NC_004350.2"/>
</dbReference>
<dbReference type="SMR" id="Q8DSF4"/>
<dbReference type="STRING" id="210007.SMU_1834"/>
<dbReference type="KEGG" id="smu:SMU_1834"/>
<dbReference type="PATRIC" id="fig|210007.7.peg.1637"/>
<dbReference type="eggNOG" id="COG0787">
    <property type="taxonomic scope" value="Bacteria"/>
</dbReference>
<dbReference type="HOGENOM" id="CLU_028393_2_1_9"/>
<dbReference type="OrthoDB" id="9813814at2"/>
<dbReference type="PhylomeDB" id="Q8DSF4"/>
<dbReference type="BRENDA" id="5.1.1.1">
    <property type="organism ID" value="14748"/>
</dbReference>
<dbReference type="UniPathway" id="UPA00042">
    <property type="reaction ID" value="UER00497"/>
</dbReference>
<dbReference type="Proteomes" id="UP000002512">
    <property type="component" value="Chromosome"/>
</dbReference>
<dbReference type="GO" id="GO:0005829">
    <property type="term" value="C:cytosol"/>
    <property type="evidence" value="ECO:0007669"/>
    <property type="project" value="TreeGrafter"/>
</dbReference>
<dbReference type="GO" id="GO:0008784">
    <property type="term" value="F:alanine racemase activity"/>
    <property type="evidence" value="ECO:0007669"/>
    <property type="project" value="UniProtKB-UniRule"/>
</dbReference>
<dbReference type="GO" id="GO:0030170">
    <property type="term" value="F:pyridoxal phosphate binding"/>
    <property type="evidence" value="ECO:0007669"/>
    <property type="project" value="UniProtKB-UniRule"/>
</dbReference>
<dbReference type="GO" id="GO:0030632">
    <property type="term" value="P:D-alanine biosynthetic process"/>
    <property type="evidence" value="ECO:0007669"/>
    <property type="project" value="UniProtKB-UniRule"/>
</dbReference>
<dbReference type="GO" id="GO:0009252">
    <property type="term" value="P:peptidoglycan biosynthetic process"/>
    <property type="evidence" value="ECO:0007669"/>
    <property type="project" value="TreeGrafter"/>
</dbReference>
<dbReference type="CDD" id="cd00430">
    <property type="entry name" value="PLPDE_III_AR"/>
    <property type="match status" value="1"/>
</dbReference>
<dbReference type="FunFam" id="2.40.37.10:FF:000006">
    <property type="entry name" value="Alanine racemase"/>
    <property type="match status" value="1"/>
</dbReference>
<dbReference type="FunFam" id="3.20.20.10:FF:000002">
    <property type="entry name" value="Alanine racemase"/>
    <property type="match status" value="1"/>
</dbReference>
<dbReference type="Gene3D" id="3.20.20.10">
    <property type="entry name" value="Alanine racemase"/>
    <property type="match status" value="1"/>
</dbReference>
<dbReference type="Gene3D" id="2.40.37.10">
    <property type="entry name" value="Lyase, Ornithine Decarboxylase, Chain A, domain 1"/>
    <property type="match status" value="1"/>
</dbReference>
<dbReference type="HAMAP" id="MF_01201">
    <property type="entry name" value="Ala_racemase"/>
    <property type="match status" value="1"/>
</dbReference>
<dbReference type="InterPro" id="IPR000821">
    <property type="entry name" value="Ala_racemase"/>
</dbReference>
<dbReference type="InterPro" id="IPR009006">
    <property type="entry name" value="Ala_racemase/Decarboxylase_C"/>
</dbReference>
<dbReference type="InterPro" id="IPR011079">
    <property type="entry name" value="Ala_racemase_C"/>
</dbReference>
<dbReference type="InterPro" id="IPR001608">
    <property type="entry name" value="Ala_racemase_N"/>
</dbReference>
<dbReference type="InterPro" id="IPR020622">
    <property type="entry name" value="Ala_racemase_pyridoxalP-BS"/>
</dbReference>
<dbReference type="InterPro" id="IPR029066">
    <property type="entry name" value="PLP-binding_barrel"/>
</dbReference>
<dbReference type="NCBIfam" id="TIGR00492">
    <property type="entry name" value="alr"/>
    <property type="match status" value="1"/>
</dbReference>
<dbReference type="PANTHER" id="PTHR30511">
    <property type="entry name" value="ALANINE RACEMASE"/>
    <property type="match status" value="1"/>
</dbReference>
<dbReference type="PANTHER" id="PTHR30511:SF0">
    <property type="entry name" value="ALANINE RACEMASE, CATABOLIC-RELATED"/>
    <property type="match status" value="1"/>
</dbReference>
<dbReference type="Pfam" id="PF00842">
    <property type="entry name" value="Ala_racemase_C"/>
    <property type="match status" value="1"/>
</dbReference>
<dbReference type="Pfam" id="PF01168">
    <property type="entry name" value="Ala_racemase_N"/>
    <property type="match status" value="1"/>
</dbReference>
<dbReference type="PRINTS" id="PR00992">
    <property type="entry name" value="ALARACEMASE"/>
</dbReference>
<dbReference type="SMART" id="SM01005">
    <property type="entry name" value="Ala_racemase_C"/>
    <property type="match status" value="1"/>
</dbReference>
<dbReference type="SUPFAM" id="SSF50621">
    <property type="entry name" value="Alanine racemase C-terminal domain-like"/>
    <property type="match status" value="1"/>
</dbReference>
<dbReference type="SUPFAM" id="SSF51419">
    <property type="entry name" value="PLP-binding barrel"/>
    <property type="match status" value="1"/>
</dbReference>
<dbReference type="PROSITE" id="PS00395">
    <property type="entry name" value="ALANINE_RACEMASE"/>
    <property type="match status" value="1"/>
</dbReference>
<protein>
    <recommendedName>
        <fullName evidence="1">Alanine racemase</fullName>
        <ecNumber evidence="1">5.1.1.1</ecNumber>
    </recommendedName>
</protein>
<sequence length="371" mass="40420">MIASYHRPTTALVHLDRIKFNIEQVQHHIPKSAKTFAVVKANAYGHGAVQVAQAIQKQVDGFCVSNLDEALELRQAGLNDFILILGVLLPEEVALAKKENITITVADLDWFDKVQTENIDLAGLSVHVKVDSGMGRIGVRSTAEANQLIAGLQKAGATVNGIFTHFATADEASTVKFSQQLEMFTTLISQLDYKPQTVHASNSATSIWHSDTVMNAVRLGIVMYGLNPSGNALELPYEVKPALELTSALVQVKEVQAGDTVGYGATYTASQAEIIGTVPVGYADGWTRDLQGFHVLVNGHYCEIVGRVSMDQITIRLPKAYPLGTKVTLIGQDGHETISATDVAEKRETINYEVLCLISDRVPRKYDKKFS</sequence>
<keyword id="KW-0413">Isomerase</keyword>
<keyword id="KW-0663">Pyridoxal phosphate</keyword>
<keyword id="KW-1185">Reference proteome</keyword>
<evidence type="ECO:0000255" key="1">
    <source>
        <dbReference type="HAMAP-Rule" id="MF_01201"/>
    </source>
</evidence>